<proteinExistence type="predicted"/>
<keyword id="KW-1185">Reference proteome</keyword>
<dbReference type="EMBL" id="Z70177">
    <property type="protein sequence ID" value="CAA94061.1"/>
    <property type="molecule type" value="Genomic_DNA"/>
</dbReference>
<dbReference type="EMBL" id="AL009126">
    <property type="protein sequence ID" value="CAB13117.2"/>
    <property type="molecule type" value="Genomic_DNA"/>
</dbReference>
<dbReference type="PIR" id="F69731">
    <property type="entry name" value="F69731"/>
</dbReference>
<dbReference type="RefSeq" id="NP_389142.2">
    <property type="nucleotide sequence ID" value="NC_000964.3"/>
</dbReference>
<dbReference type="RefSeq" id="WP_003245836.1">
    <property type="nucleotide sequence ID" value="NZ_OZ025638.1"/>
</dbReference>
<dbReference type="SMR" id="P54326"/>
<dbReference type="FunCoup" id="P54326">
    <property type="interactions" value="44"/>
</dbReference>
<dbReference type="IntAct" id="P54326">
    <property type="interactions" value="1"/>
</dbReference>
<dbReference type="STRING" id="224308.BSU12600"/>
<dbReference type="PaxDb" id="224308-BSU12600"/>
<dbReference type="EnsemblBacteria" id="CAB13117">
    <property type="protein sequence ID" value="CAB13117"/>
    <property type="gene ID" value="BSU_12600"/>
</dbReference>
<dbReference type="GeneID" id="939833"/>
<dbReference type="KEGG" id="bsu:BSU12600"/>
<dbReference type="PATRIC" id="fig|224308.179.peg.1364"/>
<dbReference type="eggNOG" id="COG0338">
    <property type="taxonomic scope" value="Bacteria"/>
</dbReference>
<dbReference type="InParanoid" id="P54326"/>
<dbReference type="OrthoDB" id="2080376at2"/>
<dbReference type="BioCyc" id="BSUB:BSU12600-MONOMER"/>
<dbReference type="Proteomes" id="UP000001570">
    <property type="component" value="Chromosome"/>
</dbReference>
<dbReference type="InterPro" id="IPR027924">
    <property type="entry name" value="XkdF"/>
</dbReference>
<dbReference type="Pfam" id="PF14550">
    <property type="entry name" value="Peptidase_S78_2"/>
    <property type="match status" value="1"/>
</dbReference>
<evidence type="ECO:0000256" key="1">
    <source>
        <dbReference type="SAM" id="MobiDB-lite"/>
    </source>
</evidence>
<evidence type="ECO:0000305" key="2"/>
<comment type="similarity">
    <text evidence="2">To B.subtilis YqbD.</text>
</comment>
<feature type="chain" id="PRO_0000066020" description="Phage-like element PBSX protein XkdF">
    <location>
        <begin position="1"/>
        <end position="275"/>
    </location>
</feature>
<feature type="region of interest" description="Disordered" evidence="1">
    <location>
        <begin position="247"/>
        <end position="275"/>
    </location>
</feature>
<feature type="sequence conflict" description="In Ref. 1; CAA94061." evidence="2" ref="1">
    <original>V</original>
    <variation>L</variation>
    <location>
        <position position="135"/>
    </location>
</feature>
<feature type="sequence conflict" description="In Ref. 1; CAA94061." evidence="2" ref="1">
    <original>K</original>
    <variation>N</variation>
    <location>
        <position position="140"/>
    </location>
</feature>
<protein>
    <recommendedName>
        <fullName>Phage-like element PBSX protein XkdF</fullName>
    </recommendedName>
</protein>
<accession>P54326</accession>
<sequence length="275" mass="31040">MARELRNAKISFVSYVDKAANQTEFFFTKSAEPPSFEKKVRLFTKSEQDEQKLVYGIVYEPDVPDAHGDFMTAEEIEKAAHGFLAEAREIDINHSFEGGTGVVVESYVAPDDFMIGSKRITKGSWVLVTRASDEVWEQIKAGIITGYSMAGTADVYEEEPVEKAGFFSVFKQMLADKTGKETEEMRKEDMKESFEHALYPLLKRLERIEKNTDTEEKPEQTGDDERLKKLVEDMLAPLIERIEALEKARGASKQTADDTGGNTEQVKKSIWSGLL</sequence>
<name>XKDF_BACSU</name>
<organism>
    <name type="scientific">Bacillus subtilis (strain 168)</name>
    <dbReference type="NCBI Taxonomy" id="224308"/>
    <lineage>
        <taxon>Bacteria</taxon>
        <taxon>Bacillati</taxon>
        <taxon>Bacillota</taxon>
        <taxon>Bacilli</taxon>
        <taxon>Bacillales</taxon>
        <taxon>Bacillaceae</taxon>
        <taxon>Bacillus</taxon>
    </lineage>
</organism>
<gene>
    <name type="primary">xkdF</name>
    <name type="ordered locus">BSU12600</name>
</gene>
<reference key="1">
    <citation type="submission" date="1996-03" db="EMBL/GenBank/DDBJ databases">
        <authorList>
            <person name="Krogh S."/>
            <person name="O'Reilly M."/>
            <person name="Nolan N."/>
            <person name="Devine K.M."/>
        </authorList>
    </citation>
    <scope>NUCLEOTIDE SEQUENCE [GENOMIC DNA]</scope>
    <source>
        <strain>168</strain>
    </source>
</reference>
<reference key="2">
    <citation type="journal article" date="1997" name="Nature">
        <title>The complete genome sequence of the Gram-positive bacterium Bacillus subtilis.</title>
        <authorList>
            <person name="Kunst F."/>
            <person name="Ogasawara N."/>
            <person name="Moszer I."/>
            <person name="Albertini A.M."/>
            <person name="Alloni G."/>
            <person name="Azevedo V."/>
            <person name="Bertero M.G."/>
            <person name="Bessieres P."/>
            <person name="Bolotin A."/>
            <person name="Borchert S."/>
            <person name="Borriss R."/>
            <person name="Boursier L."/>
            <person name="Brans A."/>
            <person name="Braun M."/>
            <person name="Brignell S.C."/>
            <person name="Bron S."/>
            <person name="Brouillet S."/>
            <person name="Bruschi C.V."/>
            <person name="Caldwell B."/>
            <person name="Capuano V."/>
            <person name="Carter N.M."/>
            <person name="Choi S.-K."/>
            <person name="Codani J.-J."/>
            <person name="Connerton I.F."/>
            <person name="Cummings N.J."/>
            <person name="Daniel R.A."/>
            <person name="Denizot F."/>
            <person name="Devine K.M."/>
            <person name="Duesterhoeft A."/>
            <person name="Ehrlich S.D."/>
            <person name="Emmerson P.T."/>
            <person name="Entian K.-D."/>
            <person name="Errington J."/>
            <person name="Fabret C."/>
            <person name="Ferrari E."/>
            <person name="Foulger D."/>
            <person name="Fritz C."/>
            <person name="Fujita M."/>
            <person name="Fujita Y."/>
            <person name="Fuma S."/>
            <person name="Galizzi A."/>
            <person name="Galleron N."/>
            <person name="Ghim S.-Y."/>
            <person name="Glaser P."/>
            <person name="Goffeau A."/>
            <person name="Golightly E.J."/>
            <person name="Grandi G."/>
            <person name="Guiseppi G."/>
            <person name="Guy B.J."/>
            <person name="Haga K."/>
            <person name="Haiech J."/>
            <person name="Harwood C.R."/>
            <person name="Henaut A."/>
            <person name="Hilbert H."/>
            <person name="Holsappel S."/>
            <person name="Hosono S."/>
            <person name="Hullo M.-F."/>
            <person name="Itaya M."/>
            <person name="Jones L.-M."/>
            <person name="Joris B."/>
            <person name="Karamata D."/>
            <person name="Kasahara Y."/>
            <person name="Klaerr-Blanchard M."/>
            <person name="Klein C."/>
            <person name="Kobayashi Y."/>
            <person name="Koetter P."/>
            <person name="Koningstein G."/>
            <person name="Krogh S."/>
            <person name="Kumano M."/>
            <person name="Kurita K."/>
            <person name="Lapidus A."/>
            <person name="Lardinois S."/>
            <person name="Lauber J."/>
            <person name="Lazarevic V."/>
            <person name="Lee S.-M."/>
            <person name="Levine A."/>
            <person name="Liu H."/>
            <person name="Masuda S."/>
            <person name="Mauel C."/>
            <person name="Medigue C."/>
            <person name="Medina N."/>
            <person name="Mellado R.P."/>
            <person name="Mizuno M."/>
            <person name="Moestl D."/>
            <person name="Nakai S."/>
            <person name="Noback M."/>
            <person name="Noone D."/>
            <person name="O'Reilly M."/>
            <person name="Ogawa K."/>
            <person name="Ogiwara A."/>
            <person name="Oudega B."/>
            <person name="Park S.-H."/>
            <person name="Parro V."/>
            <person name="Pohl T.M."/>
            <person name="Portetelle D."/>
            <person name="Porwollik S."/>
            <person name="Prescott A.M."/>
            <person name="Presecan E."/>
            <person name="Pujic P."/>
            <person name="Purnelle B."/>
            <person name="Rapoport G."/>
            <person name="Rey M."/>
            <person name="Reynolds S."/>
            <person name="Rieger M."/>
            <person name="Rivolta C."/>
            <person name="Rocha E."/>
            <person name="Roche B."/>
            <person name="Rose M."/>
            <person name="Sadaie Y."/>
            <person name="Sato T."/>
            <person name="Scanlan E."/>
            <person name="Schleich S."/>
            <person name="Schroeter R."/>
            <person name="Scoffone F."/>
            <person name="Sekiguchi J."/>
            <person name="Sekowska A."/>
            <person name="Seror S.J."/>
            <person name="Serror P."/>
            <person name="Shin B.-S."/>
            <person name="Soldo B."/>
            <person name="Sorokin A."/>
            <person name="Tacconi E."/>
            <person name="Takagi T."/>
            <person name="Takahashi H."/>
            <person name="Takemaru K."/>
            <person name="Takeuchi M."/>
            <person name="Tamakoshi A."/>
            <person name="Tanaka T."/>
            <person name="Terpstra P."/>
            <person name="Tognoni A."/>
            <person name="Tosato V."/>
            <person name="Uchiyama S."/>
            <person name="Vandenbol M."/>
            <person name="Vannier F."/>
            <person name="Vassarotti A."/>
            <person name="Viari A."/>
            <person name="Wambutt R."/>
            <person name="Wedler E."/>
            <person name="Wedler H."/>
            <person name="Weitzenegger T."/>
            <person name="Winters P."/>
            <person name="Wipat A."/>
            <person name="Yamamoto H."/>
            <person name="Yamane K."/>
            <person name="Yasumoto K."/>
            <person name="Yata K."/>
            <person name="Yoshida K."/>
            <person name="Yoshikawa H.-F."/>
            <person name="Zumstein E."/>
            <person name="Yoshikawa H."/>
            <person name="Danchin A."/>
        </authorList>
    </citation>
    <scope>NUCLEOTIDE SEQUENCE [LARGE SCALE GENOMIC DNA]</scope>
    <source>
        <strain>168</strain>
    </source>
</reference>
<reference key="3">
    <citation type="journal article" date="2009" name="Microbiology">
        <title>From a consortium sequence to a unified sequence: the Bacillus subtilis 168 reference genome a decade later.</title>
        <authorList>
            <person name="Barbe V."/>
            <person name="Cruveiller S."/>
            <person name="Kunst F."/>
            <person name="Lenoble P."/>
            <person name="Meurice G."/>
            <person name="Sekowska A."/>
            <person name="Vallenet D."/>
            <person name="Wang T."/>
            <person name="Moszer I."/>
            <person name="Medigue C."/>
            <person name="Danchin A."/>
        </authorList>
    </citation>
    <scope>SEQUENCE REVISION TO 135 AND 140</scope>
</reference>